<proteinExistence type="evidence at transcript level"/>
<keyword id="KW-1015">Disulfide bond</keyword>
<keyword id="KW-0249">Electron transport</keyword>
<keyword id="KW-0256">Endoplasmic reticulum</keyword>
<keyword id="KW-0413">Isomerase</keyword>
<keyword id="KW-0449">Lipoprotein</keyword>
<keyword id="KW-0472">Membrane</keyword>
<keyword id="KW-0496">Mitochondrion</keyword>
<keyword id="KW-0564">Palmitate</keyword>
<keyword id="KW-0597">Phosphoprotein</keyword>
<keyword id="KW-0676">Redox-active center</keyword>
<keyword id="KW-1185">Reference proteome</keyword>
<keyword id="KW-0964">Secreted</keyword>
<keyword id="KW-0732">Signal</keyword>
<keyword id="KW-0812">Transmembrane</keyword>
<keyword id="KW-1133">Transmembrane helix</keyword>
<keyword id="KW-0813">Transport</keyword>
<feature type="signal peptide" evidence="2">
    <location>
        <begin position="1"/>
        <end position="26"/>
    </location>
</feature>
<feature type="chain" id="PRO_0000273551" description="Thioredoxin-related transmembrane protein 1">
    <location>
        <begin position="27"/>
        <end position="278"/>
    </location>
</feature>
<feature type="topological domain" description="Extracellular" evidence="2">
    <location>
        <begin position="27"/>
        <end position="180"/>
    </location>
</feature>
<feature type="transmembrane region" description="Helical" evidence="2">
    <location>
        <begin position="181"/>
        <end position="203"/>
    </location>
</feature>
<feature type="topological domain" description="Cytoplasmic" evidence="2">
    <location>
        <begin position="204"/>
        <end position="278"/>
    </location>
</feature>
<feature type="domain" description="Thioredoxin" evidence="3">
    <location>
        <begin position="27"/>
        <end position="132"/>
    </location>
</feature>
<feature type="region of interest" description="Disordered" evidence="4">
    <location>
        <begin position="213"/>
        <end position="278"/>
    </location>
</feature>
<feature type="compositionally biased region" description="Acidic residues" evidence="4">
    <location>
        <begin position="235"/>
        <end position="250"/>
    </location>
</feature>
<feature type="active site" description="Nucleophile" evidence="1">
    <location>
        <position position="56"/>
    </location>
</feature>
<feature type="active site" description="Nucleophile" evidence="1">
    <location>
        <position position="59"/>
    </location>
</feature>
<feature type="modified residue" description="Phosphoserine" evidence="1">
    <location>
        <position position="226"/>
    </location>
</feature>
<feature type="modified residue" description="Phosphoserine" evidence="1">
    <location>
        <position position="245"/>
    </location>
</feature>
<feature type="modified residue" description="Phosphoserine" evidence="1">
    <location>
        <position position="268"/>
    </location>
</feature>
<feature type="modified residue" description="Phosphoserine" evidence="1">
    <location>
        <position position="272"/>
    </location>
</feature>
<feature type="modified residue" description="Phosphoserine" evidence="1">
    <location>
        <position position="278"/>
    </location>
</feature>
<feature type="lipid moiety-binding region" description="S-palmitoyl cysteine" evidence="1">
    <location>
        <position position="205"/>
    </location>
</feature>
<feature type="lipid moiety-binding region" description="S-palmitoyl cysteine" evidence="1">
    <location>
        <position position="207"/>
    </location>
</feature>
<feature type="disulfide bond" description="Redox-active" evidence="3">
    <location>
        <begin position="56"/>
        <end position="59"/>
    </location>
</feature>
<protein>
    <recommendedName>
        <fullName>Thioredoxin-related transmembrane protein 1</fullName>
    </recommendedName>
    <alternativeName>
        <fullName evidence="5">Protein disulfide-isomerase TMX1</fullName>
        <ecNumber evidence="1">5.3.4.1</ecNumber>
    </alternativeName>
    <alternativeName>
        <fullName>Thioredoxin domain-containing protein 1</fullName>
    </alternativeName>
</protein>
<gene>
    <name type="primary">TMX1</name>
    <name type="synonym">TXNDC1</name>
</gene>
<sequence>MAPSGSLRIPVAVLLLLLWGAPWAHGKRSDVRIITDENWRELLEGEWMIEFYAPWCPACQNLQPEWESFAEWGEDLEVNVAKVDVTEQPGLSGRFIITALPTIYHCKDGEFRRYQGPRTKKDFINFISDKEWKSIEPVSSWFGPGSILMSSMSALFQLSMWIRTCHNYFIEDLGLPIWGSYTVFALATLLSGLLLGLFMIFVADCLCPSKRRRPQPYPSRKLLPESSQPLKKVEEEQEADVEDVSEEESESKEGANKDFAQNAVRQRSVGPSLATDKS</sequence>
<name>TMX1_BOVIN</name>
<evidence type="ECO:0000250" key="1">
    <source>
        <dbReference type="UniProtKB" id="Q9H3N1"/>
    </source>
</evidence>
<evidence type="ECO:0000255" key="2"/>
<evidence type="ECO:0000255" key="3">
    <source>
        <dbReference type="PROSITE-ProRule" id="PRU00691"/>
    </source>
</evidence>
<evidence type="ECO:0000256" key="4">
    <source>
        <dbReference type="SAM" id="MobiDB-lite"/>
    </source>
</evidence>
<evidence type="ECO:0000305" key="5"/>
<comment type="function">
    <text evidence="1">Thiredoxin domain-containing protein that participates in various redox reactions through the reversible oxidation of its active center dithiol to a disulfide and catalyze dithiol-disulfide exchange reactions. Acts as a key inhibitor of the alternative triglyceride biosynthesis pathway by inhibiting the activity of TMEM68/DIESL at the endoplasmic reticulum, thereby restricting accumulation of triacylglycerol. The alternative triglyceride biosynthesis pathway mediates formation of triacylglycerol from diacylglycerol and membrane phospholipids. Acts as a protein disulfide isomerase by catalyzing formation or reduction of disulfide bonds. Specifically mediates formation of disulfide bonds of transmembrane proteins at the endoplasmic reticulum membrane. Involved in endoplasmic reticulum-associated degradation (ERAD) via its protein disulfide isomerase activity by acting on folding-defective polypeptides at the endoplasmic reticulum membrane. Acts as a negative regulator of platelet aggregation following secretion in the extracellular space. Acts as a regulator of endoplasmic reticulum-mitochondria contact sites via its ability to regulate redox signals. Regulates endoplasmic reticulum-mitochondria Ca(2+) flux.</text>
</comment>
<comment type="catalytic activity">
    <reaction evidence="1">
        <text>Catalyzes the rearrangement of -S-S- bonds in proteins.</text>
        <dbReference type="EC" id="5.3.4.1"/>
    </reaction>
</comment>
<comment type="subunit">
    <text evidence="1">Interacts with ATP2A2.</text>
</comment>
<comment type="subcellular location">
    <subcellularLocation>
        <location evidence="1">Endoplasmic reticulum membrane</location>
        <topology evidence="2">Single-pass type I membrane protein</topology>
    </subcellularLocation>
    <subcellularLocation>
        <location evidence="1">Mitochondrion membrane</location>
        <topology evidence="2">Single-pass type I membrane protein</topology>
    </subcellularLocation>
    <subcellularLocation>
        <location evidence="1">Secreted</location>
    </subcellularLocation>
    <text evidence="1">Predominantly found in the endoplasmic reticulum. Secreted in the extracellular space following thrombin stimulation. Localizes to mitochondria-associated endoplasmic reticulum membrane (MAM); palmitoylation is required for MAM localization.</text>
</comment>
<comment type="PTM">
    <text evidence="1">Palmitoylated; palmitoylation is required for localization to mitochondria-associated endoplasmic reticulum membrane (MAM).</text>
</comment>
<accession>Q0Z7W6</accession>
<accession>A3KN45</accession>
<accession>A5D9C0</accession>
<reference key="1">
    <citation type="submission" date="2006-06" db="EMBL/GenBank/DDBJ databases">
        <title>Estimating probability of parentage in U.S. beef and dairy cattle with single nucleotide polymorphisms.</title>
        <authorList>
            <person name="Heaton M.P."/>
            <person name="Clawson M.L."/>
            <person name="Snelling W.M."/>
            <person name="Keele J.W."/>
            <person name="Harhay G.P."/>
            <person name="Wiedmann R.T."/>
            <person name="Bennett G.L."/>
            <person name="Smith T.P.L."/>
            <person name="Freking B.A."/>
            <person name="Van Tassell C.P."/>
            <person name="Sonstegard T.S."/>
            <person name="Gasbarre L.C."/>
            <person name="Moore S.S."/>
            <person name="Murdoch B."/>
            <person name="McKay S.D."/>
            <person name="Kalbfleisch T."/>
            <person name="Laegreid W.W."/>
        </authorList>
    </citation>
    <scope>NUCLEOTIDE SEQUENCE [GENOMIC DNA]</scope>
</reference>
<reference key="2">
    <citation type="journal article" date="2005" name="BMC Genomics">
        <title>Characterization of 954 bovine full-CDS cDNA sequences.</title>
        <authorList>
            <person name="Harhay G.P."/>
            <person name="Sonstegard T.S."/>
            <person name="Keele J.W."/>
            <person name="Heaton M.P."/>
            <person name="Clawson M.L."/>
            <person name="Snelling W.M."/>
            <person name="Wiedmann R.T."/>
            <person name="Van Tassell C.P."/>
            <person name="Smith T.P.L."/>
        </authorList>
    </citation>
    <scope>NUCLEOTIDE SEQUENCE [LARGE SCALE MRNA]</scope>
</reference>
<reference key="3">
    <citation type="submission" date="2007-02" db="EMBL/GenBank/DDBJ databases">
        <authorList>
            <consortium name="NIH - Mammalian Gene Collection (MGC) project"/>
        </authorList>
    </citation>
    <scope>NUCLEOTIDE SEQUENCE [LARGE SCALE MRNA]</scope>
    <source>
        <strain>Hereford</strain>
        <tissue>Thymus</tissue>
    </source>
</reference>
<organism>
    <name type="scientific">Bos taurus</name>
    <name type="common">Bovine</name>
    <dbReference type="NCBI Taxonomy" id="9913"/>
    <lineage>
        <taxon>Eukaryota</taxon>
        <taxon>Metazoa</taxon>
        <taxon>Chordata</taxon>
        <taxon>Craniata</taxon>
        <taxon>Vertebrata</taxon>
        <taxon>Euteleostomi</taxon>
        <taxon>Mammalia</taxon>
        <taxon>Eutheria</taxon>
        <taxon>Laurasiatheria</taxon>
        <taxon>Artiodactyla</taxon>
        <taxon>Ruminantia</taxon>
        <taxon>Pecora</taxon>
        <taxon>Bovidae</taxon>
        <taxon>Bovinae</taxon>
        <taxon>Bos</taxon>
    </lineage>
</organism>
<dbReference type="EC" id="5.3.4.1" evidence="1"/>
<dbReference type="EMBL" id="DQ786761">
    <property type="protein sequence ID" value="ABG45803.1"/>
    <property type="molecule type" value="Genomic_DNA"/>
</dbReference>
<dbReference type="EMBL" id="BT030539">
    <property type="protein sequence ID" value="ABQ12979.1"/>
    <property type="molecule type" value="mRNA"/>
</dbReference>
<dbReference type="EMBL" id="BC133591">
    <property type="protein sequence ID" value="AAI33592.1"/>
    <property type="molecule type" value="mRNA"/>
</dbReference>
<dbReference type="RefSeq" id="NP_001068853.1">
    <property type="nucleotide sequence ID" value="NM_001075385.2"/>
</dbReference>
<dbReference type="SMR" id="Q0Z7W6"/>
<dbReference type="FunCoup" id="Q0Z7W6">
    <property type="interactions" value="3588"/>
</dbReference>
<dbReference type="STRING" id="9913.ENSBTAP00000014908"/>
<dbReference type="SwissPalm" id="Q0Z7W6"/>
<dbReference type="PaxDb" id="9913-ENSBTAP00000014908"/>
<dbReference type="Ensembl" id="ENSBTAT00000014908.3">
    <property type="protein sequence ID" value="ENSBTAP00000014908.2"/>
    <property type="gene ID" value="ENSBTAG00000011225.4"/>
</dbReference>
<dbReference type="GeneID" id="509037"/>
<dbReference type="KEGG" id="bta:509037"/>
<dbReference type="CTD" id="81542"/>
<dbReference type="VEuPathDB" id="HostDB:ENSBTAG00000011225"/>
<dbReference type="VGNC" id="VGNC:50016">
    <property type="gene designation" value="TMX1"/>
</dbReference>
<dbReference type="eggNOG" id="KOG0913">
    <property type="taxonomic scope" value="Eukaryota"/>
</dbReference>
<dbReference type="GeneTree" id="ENSGT00940000155959"/>
<dbReference type="HOGENOM" id="CLU_069292_2_1_1"/>
<dbReference type="InParanoid" id="Q0Z7W6"/>
<dbReference type="OMA" id="FRQYKGS"/>
<dbReference type="OrthoDB" id="7869097at2759"/>
<dbReference type="TreeFam" id="TF106376"/>
<dbReference type="Proteomes" id="UP000009136">
    <property type="component" value="Chromosome 10"/>
</dbReference>
<dbReference type="Bgee" id="ENSBTAG00000011225">
    <property type="expression patterns" value="Expressed in spermatid and 107 other cell types or tissues"/>
</dbReference>
<dbReference type="GO" id="GO:0012505">
    <property type="term" value="C:endomembrane system"/>
    <property type="evidence" value="ECO:0000318"/>
    <property type="project" value="GO_Central"/>
</dbReference>
<dbReference type="GO" id="GO:0005789">
    <property type="term" value="C:endoplasmic reticulum membrane"/>
    <property type="evidence" value="ECO:0000250"/>
    <property type="project" value="UniProtKB"/>
</dbReference>
<dbReference type="GO" id="GO:0005576">
    <property type="term" value="C:extracellular region"/>
    <property type="evidence" value="ECO:0007669"/>
    <property type="project" value="UniProtKB-SubCell"/>
</dbReference>
<dbReference type="GO" id="GO:0044233">
    <property type="term" value="C:mitochondria-associated endoplasmic reticulum membrane contact site"/>
    <property type="evidence" value="ECO:0000250"/>
    <property type="project" value="UniProtKB"/>
</dbReference>
<dbReference type="GO" id="GO:0031966">
    <property type="term" value="C:mitochondrial membrane"/>
    <property type="evidence" value="ECO:0007669"/>
    <property type="project" value="UniProtKB-SubCell"/>
</dbReference>
<dbReference type="GO" id="GO:0015036">
    <property type="term" value="F:disulfide oxidoreductase activity"/>
    <property type="evidence" value="ECO:0000318"/>
    <property type="project" value="GO_Central"/>
</dbReference>
<dbReference type="GO" id="GO:0004857">
    <property type="term" value="F:enzyme inhibitor activity"/>
    <property type="evidence" value="ECO:0000250"/>
    <property type="project" value="UniProtKB"/>
</dbReference>
<dbReference type="GO" id="GO:0003756">
    <property type="term" value="F:protein disulfide isomerase activity"/>
    <property type="evidence" value="ECO:0000250"/>
    <property type="project" value="UniProtKB"/>
</dbReference>
<dbReference type="GO" id="GO:0015035">
    <property type="term" value="F:protein-disulfide reductase activity"/>
    <property type="evidence" value="ECO:0000250"/>
    <property type="project" value="UniProtKB"/>
</dbReference>
<dbReference type="GO" id="GO:0090331">
    <property type="term" value="P:negative regulation of platelet aggregation"/>
    <property type="evidence" value="ECO:0000250"/>
    <property type="project" value="UniProtKB"/>
</dbReference>
<dbReference type="GO" id="GO:0010868">
    <property type="term" value="P:negative regulation of triglyceride biosynthetic process"/>
    <property type="evidence" value="ECO:0000250"/>
    <property type="project" value="UniProtKB"/>
</dbReference>
<dbReference type="GO" id="GO:1904294">
    <property type="term" value="P:positive regulation of ERAD pathway"/>
    <property type="evidence" value="ECO:0000250"/>
    <property type="project" value="UniProtKB"/>
</dbReference>
<dbReference type="GO" id="GO:0051924">
    <property type="term" value="P:regulation of calcium ion transport"/>
    <property type="evidence" value="ECO:0007669"/>
    <property type="project" value="Ensembl"/>
</dbReference>
<dbReference type="GO" id="GO:0034976">
    <property type="term" value="P:response to endoplasmic reticulum stress"/>
    <property type="evidence" value="ECO:0007669"/>
    <property type="project" value="Ensembl"/>
</dbReference>
<dbReference type="CDD" id="cd02994">
    <property type="entry name" value="PDI_a_TMX"/>
    <property type="match status" value="1"/>
</dbReference>
<dbReference type="FunFam" id="3.40.30.10:FF:000117">
    <property type="entry name" value="thioredoxin-related transmembrane protein 1"/>
    <property type="match status" value="1"/>
</dbReference>
<dbReference type="Gene3D" id="3.40.30.10">
    <property type="entry name" value="Glutaredoxin"/>
    <property type="match status" value="1"/>
</dbReference>
<dbReference type="InterPro" id="IPR036249">
    <property type="entry name" value="Thioredoxin-like_sf"/>
</dbReference>
<dbReference type="InterPro" id="IPR017937">
    <property type="entry name" value="Thioredoxin_CS"/>
</dbReference>
<dbReference type="InterPro" id="IPR013766">
    <property type="entry name" value="Thioredoxin_domain"/>
</dbReference>
<dbReference type="InterPro" id="IPR052454">
    <property type="entry name" value="TMX_domain-containing"/>
</dbReference>
<dbReference type="PANTHER" id="PTHR46107">
    <property type="entry name" value="DUMPY: SHORTER THAN WILD-TYPE"/>
    <property type="match status" value="1"/>
</dbReference>
<dbReference type="PANTHER" id="PTHR46107:SF2">
    <property type="entry name" value="THIOREDOXIN-RELATED TRANSMEMBRANE PROTEIN 1"/>
    <property type="match status" value="1"/>
</dbReference>
<dbReference type="Pfam" id="PF00085">
    <property type="entry name" value="Thioredoxin"/>
    <property type="match status" value="1"/>
</dbReference>
<dbReference type="SUPFAM" id="SSF52833">
    <property type="entry name" value="Thioredoxin-like"/>
    <property type="match status" value="1"/>
</dbReference>
<dbReference type="PROSITE" id="PS00194">
    <property type="entry name" value="THIOREDOXIN_1"/>
    <property type="match status" value="1"/>
</dbReference>
<dbReference type="PROSITE" id="PS51352">
    <property type="entry name" value="THIOREDOXIN_2"/>
    <property type="match status" value="1"/>
</dbReference>